<reference key="1">
    <citation type="journal article" date="2008" name="Appl. Environ. Microbiol.">
        <title>Genome of the epsilonproteobacterial chemolithoautotroph Sulfurimonas denitrificans.</title>
        <authorList>
            <person name="Sievert S.M."/>
            <person name="Scott K.M."/>
            <person name="Klotz M.G."/>
            <person name="Chain P.S.G."/>
            <person name="Hauser L.J."/>
            <person name="Hemp J."/>
            <person name="Huegler M."/>
            <person name="Land M."/>
            <person name="Lapidus A."/>
            <person name="Larimer F.W."/>
            <person name="Lucas S."/>
            <person name="Malfatti S.A."/>
            <person name="Meyer F."/>
            <person name="Paulsen I.T."/>
            <person name="Ren Q."/>
            <person name="Simon J."/>
            <person name="Bailey K."/>
            <person name="Diaz E."/>
            <person name="Fitzpatrick K.A."/>
            <person name="Glover B."/>
            <person name="Gwatney N."/>
            <person name="Korajkic A."/>
            <person name="Long A."/>
            <person name="Mobberley J.M."/>
            <person name="Pantry S.N."/>
            <person name="Pazder G."/>
            <person name="Peterson S."/>
            <person name="Quintanilla J.D."/>
            <person name="Sprinkle R."/>
            <person name="Stephens J."/>
            <person name="Thomas P."/>
            <person name="Vaughn R."/>
            <person name="Weber M.J."/>
            <person name="Wooten L.L."/>
        </authorList>
    </citation>
    <scope>NUCLEOTIDE SEQUENCE [LARGE SCALE GENOMIC DNA]</scope>
    <source>
        <strain>ATCC 33889 / DSM 1251</strain>
    </source>
</reference>
<protein>
    <recommendedName>
        <fullName evidence="1">Large ribosomal subunit protein bL35</fullName>
    </recommendedName>
    <alternativeName>
        <fullName evidence="2">50S ribosomal protein L35</fullName>
    </alternativeName>
</protein>
<name>RL35_SULDN</name>
<accession>Q30U44</accession>
<organism>
    <name type="scientific">Sulfurimonas denitrificans (strain ATCC 33889 / DSM 1251)</name>
    <name type="common">Thiomicrospira denitrificans (strain ATCC 33889 / DSM 1251)</name>
    <dbReference type="NCBI Taxonomy" id="326298"/>
    <lineage>
        <taxon>Bacteria</taxon>
        <taxon>Pseudomonadati</taxon>
        <taxon>Campylobacterota</taxon>
        <taxon>Epsilonproteobacteria</taxon>
        <taxon>Campylobacterales</taxon>
        <taxon>Sulfurimonadaceae</taxon>
        <taxon>Sulfurimonas</taxon>
    </lineage>
</organism>
<proteinExistence type="inferred from homology"/>
<keyword id="KW-1185">Reference proteome</keyword>
<keyword id="KW-0687">Ribonucleoprotein</keyword>
<keyword id="KW-0689">Ribosomal protein</keyword>
<evidence type="ECO:0000255" key="1">
    <source>
        <dbReference type="HAMAP-Rule" id="MF_00514"/>
    </source>
</evidence>
<evidence type="ECO:0000305" key="2"/>
<feature type="chain" id="PRO_0000258780" description="Large ribosomal subunit protein bL35">
    <location>
        <begin position="1"/>
        <end position="63"/>
    </location>
</feature>
<gene>
    <name evidence="1" type="primary">rpmI</name>
    <name type="ordered locus">Suden_0206</name>
</gene>
<comment type="similarity">
    <text evidence="1">Belongs to the bacterial ribosomal protein bL35 family.</text>
</comment>
<dbReference type="EMBL" id="CP000153">
    <property type="protein sequence ID" value="ABB43487.1"/>
    <property type="molecule type" value="Genomic_DNA"/>
</dbReference>
<dbReference type="RefSeq" id="WP_011371842.1">
    <property type="nucleotide sequence ID" value="NC_007575.1"/>
</dbReference>
<dbReference type="SMR" id="Q30U44"/>
<dbReference type="STRING" id="326298.Suden_0206"/>
<dbReference type="KEGG" id="tdn:Suden_0206"/>
<dbReference type="eggNOG" id="COG0291">
    <property type="taxonomic scope" value="Bacteria"/>
</dbReference>
<dbReference type="HOGENOM" id="CLU_169643_4_3_7"/>
<dbReference type="OrthoDB" id="9804851at2"/>
<dbReference type="Proteomes" id="UP000002714">
    <property type="component" value="Chromosome"/>
</dbReference>
<dbReference type="GO" id="GO:0022625">
    <property type="term" value="C:cytosolic large ribosomal subunit"/>
    <property type="evidence" value="ECO:0007669"/>
    <property type="project" value="TreeGrafter"/>
</dbReference>
<dbReference type="GO" id="GO:0003735">
    <property type="term" value="F:structural constituent of ribosome"/>
    <property type="evidence" value="ECO:0007669"/>
    <property type="project" value="InterPro"/>
</dbReference>
<dbReference type="GO" id="GO:0006412">
    <property type="term" value="P:translation"/>
    <property type="evidence" value="ECO:0007669"/>
    <property type="project" value="UniProtKB-UniRule"/>
</dbReference>
<dbReference type="FunFam" id="4.10.410.60:FF:000001">
    <property type="entry name" value="50S ribosomal protein L35"/>
    <property type="match status" value="1"/>
</dbReference>
<dbReference type="Gene3D" id="4.10.410.60">
    <property type="match status" value="1"/>
</dbReference>
<dbReference type="HAMAP" id="MF_00514">
    <property type="entry name" value="Ribosomal_bL35"/>
    <property type="match status" value="1"/>
</dbReference>
<dbReference type="InterPro" id="IPR001706">
    <property type="entry name" value="Ribosomal_bL35"/>
</dbReference>
<dbReference type="InterPro" id="IPR021137">
    <property type="entry name" value="Ribosomal_bL35-like"/>
</dbReference>
<dbReference type="InterPro" id="IPR018265">
    <property type="entry name" value="Ribosomal_bL35_CS"/>
</dbReference>
<dbReference type="InterPro" id="IPR037229">
    <property type="entry name" value="Ribosomal_bL35_sf"/>
</dbReference>
<dbReference type="NCBIfam" id="TIGR00001">
    <property type="entry name" value="rpmI_bact"/>
    <property type="match status" value="1"/>
</dbReference>
<dbReference type="PANTHER" id="PTHR33343">
    <property type="entry name" value="54S RIBOSOMAL PROTEIN BL35M"/>
    <property type="match status" value="1"/>
</dbReference>
<dbReference type="PANTHER" id="PTHR33343:SF1">
    <property type="entry name" value="LARGE RIBOSOMAL SUBUNIT PROTEIN BL35M"/>
    <property type="match status" value="1"/>
</dbReference>
<dbReference type="Pfam" id="PF01632">
    <property type="entry name" value="Ribosomal_L35p"/>
    <property type="match status" value="1"/>
</dbReference>
<dbReference type="PRINTS" id="PR00064">
    <property type="entry name" value="RIBOSOMALL35"/>
</dbReference>
<dbReference type="SUPFAM" id="SSF143034">
    <property type="entry name" value="L35p-like"/>
    <property type="match status" value="1"/>
</dbReference>
<dbReference type="PROSITE" id="PS00936">
    <property type="entry name" value="RIBOSOMAL_L35"/>
    <property type="match status" value="1"/>
</dbReference>
<sequence length="63" mass="7164">MPKMKSVKGAVKRFKVKKNGTVKRGTAFRSHILTKQDPQTRTTQHKSKIIAKVDEKNVKAMIN</sequence>